<organism>
    <name type="scientific">Homo sapiens</name>
    <name type="common">Human</name>
    <dbReference type="NCBI Taxonomy" id="9606"/>
    <lineage>
        <taxon>Eukaryota</taxon>
        <taxon>Metazoa</taxon>
        <taxon>Chordata</taxon>
        <taxon>Craniata</taxon>
        <taxon>Vertebrata</taxon>
        <taxon>Euteleostomi</taxon>
        <taxon>Mammalia</taxon>
        <taxon>Eutheria</taxon>
        <taxon>Euarchontoglires</taxon>
        <taxon>Primates</taxon>
        <taxon>Haplorrhini</taxon>
        <taxon>Catarrhini</taxon>
        <taxon>Hominidae</taxon>
        <taxon>Homo</taxon>
    </lineage>
</organism>
<protein>
    <recommendedName>
        <fullName evidence="3">Protein ABHD13</fullName>
        <ecNumber>3.-.-.-</ecNumber>
    </recommendedName>
    <alternativeName>
        <fullName evidence="3">Alpha/beta hydrolase domain-containing protein 13</fullName>
        <shortName evidence="4">Abhydrolase domain-containing protein 13</shortName>
    </alternativeName>
</protein>
<gene>
    <name evidence="4" type="primary">ABHD13</name>
    <name type="synonym">C13orf6</name>
</gene>
<proteinExistence type="evidence at protein level"/>
<dbReference type="EC" id="3.-.-.-"/>
<dbReference type="EMBL" id="AK027812">
    <property type="protein sequence ID" value="BAB55387.1"/>
    <property type="status" value="ALT_INIT"/>
    <property type="molecule type" value="mRNA"/>
</dbReference>
<dbReference type="EMBL" id="AK124864">
    <property type="protein sequence ID" value="BAG54109.1"/>
    <property type="molecule type" value="mRNA"/>
</dbReference>
<dbReference type="EMBL" id="AK075195">
    <property type="status" value="NOT_ANNOTATED_CDS"/>
    <property type="molecule type" value="mRNA"/>
</dbReference>
<dbReference type="EMBL" id="AL157762">
    <property type="status" value="NOT_ANNOTATED_CDS"/>
    <property type="molecule type" value="Genomic_DNA"/>
</dbReference>
<dbReference type="EMBL" id="CH471085">
    <property type="protein sequence ID" value="EAX09097.1"/>
    <property type="molecule type" value="Genomic_DNA"/>
</dbReference>
<dbReference type="EMBL" id="BC022566">
    <property type="protein sequence ID" value="AAH22566.2"/>
    <property type="molecule type" value="mRNA"/>
</dbReference>
<dbReference type="EMBL" id="BC070226">
    <property type="protein sequence ID" value="AAH70226.1"/>
    <property type="status" value="ALT_INIT"/>
    <property type="molecule type" value="mRNA"/>
</dbReference>
<dbReference type="CCDS" id="CCDS32007.1"/>
<dbReference type="RefSeq" id="NP_116248.2">
    <property type="nucleotide sequence ID" value="NM_032859.2"/>
</dbReference>
<dbReference type="RefSeq" id="XP_011519430.1">
    <property type="nucleotide sequence ID" value="XM_011521128.4"/>
</dbReference>
<dbReference type="RefSeq" id="XP_054231049.1">
    <property type="nucleotide sequence ID" value="XM_054375074.1"/>
</dbReference>
<dbReference type="SMR" id="Q7L211"/>
<dbReference type="BioGRID" id="124378">
    <property type="interactions" value="8"/>
</dbReference>
<dbReference type="FunCoup" id="Q7L211">
    <property type="interactions" value="795"/>
</dbReference>
<dbReference type="IntAct" id="Q7L211">
    <property type="interactions" value="1"/>
</dbReference>
<dbReference type="STRING" id="9606.ENSP00000365063"/>
<dbReference type="ESTHER" id="human-ABHD13">
    <property type="family name" value="ABHD13-BEM46"/>
</dbReference>
<dbReference type="MEROPS" id="S09.051"/>
<dbReference type="GlyCosmos" id="Q7L211">
    <property type="glycosylation" value="1 site, No reported glycans"/>
</dbReference>
<dbReference type="GlyGen" id="Q7L211">
    <property type="glycosylation" value="1 site"/>
</dbReference>
<dbReference type="iPTMnet" id="Q7L211"/>
<dbReference type="PhosphoSitePlus" id="Q7L211"/>
<dbReference type="BioMuta" id="ABHD13"/>
<dbReference type="DMDM" id="74749881"/>
<dbReference type="jPOST" id="Q7L211"/>
<dbReference type="MassIVE" id="Q7L211"/>
<dbReference type="PaxDb" id="9606-ENSP00000365063"/>
<dbReference type="PeptideAtlas" id="Q7L211"/>
<dbReference type="ProteomicsDB" id="68754"/>
<dbReference type="Pumba" id="Q7L211"/>
<dbReference type="Antibodypedia" id="25425">
    <property type="antibodies" value="109 antibodies from 20 providers"/>
</dbReference>
<dbReference type="DNASU" id="84945"/>
<dbReference type="Ensembl" id="ENST00000375898.4">
    <property type="protein sequence ID" value="ENSP00000365063.3"/>
    <property type="gene ID" value="ENSG00000139826.6"/>
</dbReference>
<dbReference type="GeneID" id="84945"/>
<dbReference type="KEGG" id="hsa:84945"/>
<dbReference type="MANE-Select" id="ENST00000375898.4">
    <property type="protein sequence ID" value="ENSP00000365063.3"/>
    <property type="RefSeq nucleotide sequence ID" value="NM_032859.3"/>
    <property type="RefSeq protein sequence ID" value="NP_116248.2"/>
</dbReference>
<dbReference type="UCSC" id="uc001vqq.4">
    <property type="organism name" value="human"/>
</dbReference>
<dbReference type="AGR" id="HGNC:20293"/>
<dbReference type="CTD" id="84945"/>
<dbReference type="DisGeNET" id="84945"/>
<dbReference type="GeneCards" id="ABHD13"/>
<dbReference type="HGNC" id="HGNC:20293">
    <property type="gene designation" value="ABHD13"/>
</dbReference>
<dbReference type="HPA" id="ENSG00000139826">
    <property type="expression patterns" value="Low tissue specificity"/>
</dbReference>
<dbReference type="MIM" id="621039">
    <property type="type" value="gene"/>
</dbReference>
<dbReference type="neXtProt" id="NX_Q7L211"/>
<dbReference type="OpenTargets" id="ENSG00000139826"/>
<dbReference type="PharmGKB" id="PA134862303"/>
<dbReference type="VEuPathDB" id="HostDB:ENSG00000139826"/>
<dbReference type="eggNOG" id="KOG4391">
    <property type="taxonomic scope" value="Eukaryota"/>
</dbReference>
<dbReference type="GeneTree" id="ENSGT00940000158114"/>
<dbReference type="HOGENOM" id="CLU_029375_2_0_1"/>
<dbReference type="InParanoid" id="Q7L211"/>
<dbReference type="OMA" id="QYWTSED"/>
<dbReference type="OrthoDB" id="10249433at2759"/>
<dbReference type="PAN-GO" id="Q7L211">
    <property type="GO annotations" value="2 GO annotations based on evolutionary models"/>
</dbReference>
<dbReference type="PhylomeDB" id="Q7L211"/>
<dbReference type="TreeFam" id="TF315122"/>
<dbReference type="PathwayCommons" id="Q7L211"/>
<dbReference type="SignaLink" id="Q7L211"/>
<dbReference type="BioGRID-ORCS" id="84945">
    <property type="hits" value="63 hits in 1157 CRISPR screens"/>
</dbReference>
<dbReference type="GenomeRNAi" id="84945"/>
<dbReference type="Pharos" id="Q7L211">
    <property type="development level" value="Tdark"/>
</dbReference>
<dbReference type="PRO" id="PR:Q7L211"/>
<dbReference type="Proteomes" id="UP000005640">
    <property type="component" value="Chromosome 13"/>
</dbReference>
<dbReference type="RNAct" id="Q7L211">
    <property type="molecule type" value="protein"/>
</dbReference>
<dbReference type="Bgee" id="ENSG00000139826">
    <property type="expression patterns" value="Expressed in monocyte and 154 other cell types or tissues"/>
</dbReference>
<dbReference type="ExpressionAtlas" id="Q7L211">
    <property type="expression patterns" value="baseline and differential"/>
</dbReference>
<dbReference type="GO" id="GO:0032839">
    <property type="term" value="C:dendrite cytoplasm"/>
    <property type="evidence" value="ECO:0007669"/>
    <property type="project" value="Ensembl"/>
</dbReference>
<dbReference type="GO" id="GO:0016020">
    <property type="term" value="C:membrane"/>
    <property type="evidence" value="ECO:0007005"/>
    <property type="project" value="UniProtKB"/>
</dbReference>
<dbReference type="GO" id="GO:0008474">
    <property type="term" value="F:palmitoyl-(protein) hydrolase activity"/>
    <property type="evidence" value="ECO:0000318"/>
    <property type="project" value="GO_Central"/>
</dbReference>
<dbReference type="FunFam" id="3.40.50.1820:FF:000058">
    <property type="entry name" value="Alpha/beta hydrolase domain-containing protein 13"/>
    <property type="match status" value="1"/>
</dbReference>
<dbReference type="Gene3D" id="3.40.50.1820">
    <property type="entry name" value="alpha/beta hydrolase"/>
    <property type="match status" value="1"/>
</dbReference>
<dbReference type="InterPro" id="IPR000073">
    <property type="entry name" value="AB_hydrolase_1"/>
</dbReference>
<dbReference type="InterPro" id="IPR029058">
    <property type="entry name" value="AB_hydrolase_fold"/>
</dbReference>
<dbReference type="PANTHER" id="PTHR12277">
    <property type="entry name" value="ALPHA/BETA HYDROLASE DOMAIN-CONTAINING PROTEIN"/>
    <property type="match status" value="1"/>
</dbReference>
<dbReference type="PANTHER" id="PTHR12277:SF81">
    <property type="entry name" value="PROTEIN ABHD13"/>
    <property type="match status" value="1"/>
</dbReference>
<dbReference type="Pfam" id="PF00561">
    <property type="entry name" value="Abhydrolase_1"/>
    <property type="match status" value="1"/>
</dbReference>
<dbReference type="SUPFAM" id="SSF53474">
    <property type="entry name" value="alpha/beta-Hydrolases"/>
    <property type="match status" value="1"/>
</dbReference>
<comment type="subcellular location">
    <subcellularLocation>
        <location evidence="3">Membrane</location>
        <topology evidence="3">Single-pass type II membrane protein</topology>
    </subcellularLocation>
</comment>
<comment type="similarity">
    <text evidence="3">Belongs to the serine esterase family.</text>
</comment>
<comment type="sequence caution" evidence="3">
    <conflict type="erroneous initiation">
        <sequence resource="EMBL-CDS" id="AAH70226"/>
    </conflict>
</comment>
<comment type="sequence caution" evidence="3">
    <conflict type="erroneous termination">
        <sequence resource="EMBL" id="AK075195"/>
    </conflict>
    <text>Truncated C-terminus.</text>
</comment>
<comment type="sequence caution" evidence="3">
    <conflict type="erroneous initiation">
        <sequence resource="EMBL-CDS" id="BAB55387"/>
    </conflict>
</comment>
<keyword id="KW-0325">Glycoprotein</keyword>
<keyword id="KW-0378">Hydrolase</keyword>
<keyword id="KW-0472">Membrane</keyword>
<keyword id="KW-1267">Proteomics identification</keyword>
<keyword id="KW-1185">Reference proteome</keyword>
<keyword id="KW-0735">Signal-anchor</keyword>
<keyword id="KW-0812">Transmembrane</keyword>
<keyword id="KW-1133">Transmembrane helix</keyword>
<sequence>MEKSWMLWNFVERWLIALASWSWALCRISLLPLIVTFHLYGGIILLLLIFISIAGILYKFQDVLLYFPEQPSSSRLYVPMPTGIPHENIFIRTKDGIRLNLILIRYTGDNSPYSPTIIYFHGNAGNIGHRLPNALLMLVNLKVNLLLVDYRGYGKSEGEASEEGLYLDSEAVLDYVMTRPDLDKTKIFLFGRSLGGAVAIHLASENSHRISAIMVENTFLSIPHMASTLFSFFPMRYLPLWCYKNKFLSYRKISQCRMPSLFISGLSDQLIPPVMMKQLYELSPSRTKRLAIFPDGTHNDTWQCQGYFTALEQFIKEVVKSHSPEEMAKTSSNVTII</sequence>
<evidence type="ECO:0000250" key="1"/>
<evidence type="ECO:0000255" key="2"/>
<evidence type="ECO:0000305" key="3"/>
<evidence type="ECO:0000312" key="4">
    <source>
        <dbReference type="HGNC" id="HGNC:20293"/>
    </source>
</evidence>
<feature type="chain" id="PRO_0000281076" description="Protein ABHD13">
    <location>
        <begin position="1"/>
        <end position="337"/>
    </location>
</feature>
<feature type="transmembrane region" description="Helical; Signal-anchor for type II membrane protein" evidence="2">
    <location>
        <begin position="37"/>
        <end position="57"/>
    </location>
</feature>
<feature type="active site" description="Charge relay system" evidence="1">
    <location>
        <position position="193"/>
    </location>
</feature>
<feature type="active site" description="Charge relay system" evidence="1">
    <location>
        <position position="268"/>
    </location>
</feature>
<feature type="active site" description="Charge relay system" evidence="1">
    <location>
        <position position="298"/>
    </location>
</feature>
<feature type="glycosylation site" description="N-linked (GlcNAc...) asparagine" evidence="2">
    <location>
        <position position="299"/>
    </location>
</feature>
<feature type="sequence conflict" description="In Ref. 2; AK075195." evidence="3" ref="2">
    <original>I</original>
    <variation>V</variation>
    <location>
        <position position="43"/>
    </location>
</feature>
<feature type="sequence conflict" description="In Ref. 2; AK075195." evidence="3" ref="2">
    <original>M</original>
    <variation>I</variation>
    <location>
        <position position="80"/>
    </location>
</feature>
<accession>Q7L211</accession>
<accession>B3KWE7</accession>
<accession>Q8NBW1</accession>
<accession>Q96JX9</accession>
<name>ABHDD_HUMAN</name>
<reference key="1">
    <citation type="journal article" date="2004" name="Nat. Genet.">
        <title>Complete sequencing and characterization of 21,243 full-length human cDNAs.</title>
        <authorList>
            <person name="Ota T."/>
            <person name="Suzuki Y."/>
            <person name="Nishikawa T."/>
            <person name="Otsuki T."/>
            <person name="Sugiyama T."/>
            <person name="Irie R."/>
            <person name="Wakamatsu A."/>
            <person name="Hayashi K."/>
            <person name="Sato H."/>
            <person name="Nagai K."/>
            <person name="Kimura K."/>
            <person name="Makita H."/>
            <person name="Sekine M."/>
            <person name="Obayashi M."/>
            <person name="Nishi T."/>
            <person name="Shibahara T."/>
            <person name="Tanaka T."/>
            <person name="Ishii S."/>
            <person name="Yamamoto J."/>
            <person name="Saito K."/>
            <person name="Kawai Y."/>
            <person name="Isono Y."/>
            <person name="Nakamura Y."/>
            <person name="Nagahari K."/>
            <person name="Murakami K."/>
            <person name="Yasuda T."/>
            <person name="Iwayanagi T."/>
            <person name="Wagatsuma M."/>
            <person name="Shiratori A."/>
            <person name="Sudo H."/>
            <person name="Hosoiri T."/>
            <person name="Kaku Y."/>
            <person name="Kodaira H."/>
            <person name="Kondo H."/>
            <person name="Sugawara M."/>
            <person name="Takahashi M."/>
            <person name="Kanda K."/>
            <person name="Yokoi T."/>
            <person name="Furuya T."/>
            <person name="Kikkawa E."/>
            <person name="Omura Y."/>
            <person name="Abe K."/>
            <person name="Kamihara K."/>
            <person name="Katsuta N."/>
            <person name="Sato K."/>
            <person name="Tanikawa M."/>
            <person name="Yamazaki M."/>
            <person name="Ninomiya K."/>
            <person name="Ishibashi T."/>
            <person name="Yamashita H."/>
            <person name="Murakawa K."/>
            <person name="Fujimori K."/>
            <person name="Tanai H."/>
            <person name="Kimata M."/>
            <person name="Watanabe M."/>
            <person name="Hiraoka S."/>
            <person name="Chiba Y."/>
            <person name="Ishida S."/>
            <person name="Ono Y."/>
            <person name="Takiguchi S."/>
            <person name="Watanabe S."/>
            <person name="Yosida M."/>
            <person name="Hotuta T."/>
            <person name="Kusano J."/>
            <person name="Kanehori K."/>
            <person name="Takahashi-Fujii A."/>
            <person name="Hara H."/>
            <person name="Tanase T.-O."/>
            <person name="Nomura Y."/>
            <person name="Togiya S."/>
            <person name="Komai F."/>
            <person name="Hara R."/>
            <person name="Takeuchi K."/>
            <person name="Arita M."/>
            <person name="Imose N."/>
            <person name="Musashino K."/>
            <person name="Yuuki H."/>
            <person name="Oshima A."/>
            <person name="Sasaki N."/>
            <person name="Aotsuka S."/>
            <person name="Yoshikawa Y."/>
            <person name="Matsunawa H."/>
            <person name="Ichihara T."/>
            <person name="Shiohata N."/>
            <person name="Sano S."/>
            <person name="Moriya S."/>
            <person name="Momiyama H."/>
            <person name="Satoh N."/>
            <person name="Takami S."/>
            <person name="Terashima Y."/>
            <person name="Suzuki O."/>
            <person name="Nakagawa S."/>
            <person name="Senoh A."/>
            <person name="Mizoguchi H."/>
            <person name="Goto Y."/>
            <person name="Shimizu F."/>
            <person name="Wakebe H."/>
            <person name="Hishigaki H."/>
            <person name="Watanabe T."/>
            <person name="Sugiyama A."/>
            <person name="Takemoto M."/>
            <person name="Kawakami B."/>
            <person name="Yamazaki M."/>
            <person name="Watanabe K."/>
            <person name="Kumagai A."/>
            <person name="Itakura S."/>
            <person name="Fukuzumi Y."/>
            <person name="Fujimori Y."/>
            <person name="Komiyama M."/>
            <person name="Tashiro H."/>
            <person name="Tanigami A."/>
            <person name="Fujiwara T."/>
            <person name="Ono T."/>
            <person name="Yamada K."/>
            <person name="Fujii Y."/>
            <person name="Ozaki K."/>
            <person name="Hirao M."/>
            <person name="Ohmori Y."/>
            <person name="Kawabata A."/>
            <person name="Hikiji T."/>
            <person name="Kobatake N."/>
            <person name="Inagaki H."/>
            <person name="Ikema Y."/>
            <person name="Okamoto S."/>
            <person name="Okitani R."/>
            <person name="Kawakami T."/>
            <person name="Noguchi S."/>
            <person name="Itoh T."/>
            <person name="Shigeta K."/>
            <person name="Senba T."/>
            <person name="Matsumura K."/>
            <person name="Nakajima Y."/>
            <person name="Mizuno T."/>
            <person name="Morinaga M."/>
            <person name="Sasaki M."/>
            <person name="Togashi T."/>
            <person name="Oyama M."/>
            <person name="Hata H."/>
            <person name="Watanabe M."/>
            <person name="Komatsu T."/>
            <person name="Mizushima-Sugano J."/>
            <person name="Satoh T."/>
            <person name="Shirai Y."/>
            <person name="Takahashi Y."/>
            <person name="Nakagawa K."/>
            <person name="Okumura K."/>
            <person name="Nagase T."/>
            <person name="Nomura N."/>
            <person name="Kikuchi H."/>
            <person name="Masuho Y."/>
            <person name="Yamashita R."/>
            <person name="Nakai K."/>
            <person name="Yada T."/>
            <person name="Nakamura Y."/>
            <person name="Ohara O."/>
            <person name="Isogai T."/>
            <person name="Sugano S."/>
        </authorList>
    </citation>
    <scope>NUCLEOTIDE SEQUENCE [LARGE SCALE MRNA]</scope>
    <source>
        <tissue>Hippocampus</tissue>
        <tissue>Placenta</tissue>
    </source>
</reference>
<reference key="2">
    <citation type="journal article" date="2005" name="DNA Res.">
        <title>Signal sequence and keyword trap in silico for selection of full-length human cDNAs encoding secretion or membrane proteins from oligo-capped cDNA libraries.</title>
        <authorList>
            <person name="Otsuki T."/>
            <person name="Ota T."/>
            <person name="Nishikawa T."/>
            <person name="Hayashi K."/>
            <person name="Suzuki Y."/>
            <person name="Yamamoto J."/>
            <person name="Wakamatsu A."/>
            <person name="Kimura K."/>
            <person name="Sakamoto K."/>
            <person name="Hatano N."/>
            <person name="Kawai Y."/>
            <person name="Ishii S."/>
            <person name="Saito K."/>
            <person name="Kojima S."/>
            <person name="Sugiyama T."/>
            <person name="Ono T."/>
            <person name="Okano K."/>
            <person name="Yoshikawa Y."/>
            <person name="Aotsuka S."/>
            <person name="Sasaki N."/>
            <person name="Hattori A."/>
            <person name="Okumura K."/>
            <person name="Nagai K."/>
            <person name="Sugano S."/>
            <person name="Isogai T."/>
        </authorList>
    </citation>
    <scope>NUCLEOTIDE SEQUENCE [LARGE SCALE MRNA]</scope>
    <source>
        <tissue>Placenta</tissue>
    </source>
</reference>
<reference key="3">
    <citation type="journal article" date="2004" name="Nature">
        <title>The DNA sequence and analysis of human chromosome 13.</title>
        <authorList>
            <person name="Dunham A."/>
            <person name="Matthews L.H."/>
            <person name="Burton J."/>
            <person name="Ashurst J.L."/>
            <person name="Howe K.L."/>
            <person name="Ashcroft K.J."/>
            <person name="Beare D.M."/>
            <person name="Burford D.C."/>
            <person name="Hunt S.E."/>
            <person name="Griffiths-Jones S."/>
            <person name="Jones M.C."/>
            <person name="Keenan S.J."/>
            <person name="Oliver K."/>
            <person name="Scott C.E."/>
            <person name="Ainscough R."/>
            <person name="Almeida J.P."/>
            <person name="Ambrose K.D."/>
            <person name="Andrews D.T."/>
            <person name="Ashwell R.I.S."/>
            <person name="Babbage A.K."/>
            <person name="Bagguley C.L."/>
            <person name="Bailey J."/>
            <person name="Bannerjee R."/>
            <person name="Barlow K.F."/>
            <person name="Bates K."/>
            <person name="Beasley H."/>
            <person name="Bird C.P."/>
            <person name="Bray-Allen S."/>
            <person name="Brown A.J."/>
            <person name="Brown J.Y."/>
            <person name="Burrill W."/>
            <person name="Carder C."/>
            <person name="Carter N.P."/>
            <person name="Chapman J.C."/>
            <person name="Clamp M.E."/>
            <person name="Clark S.Y."/>
            <person name="Clarke G."/>
            <person name="Clee C.M."/>
            <person name="Clegg S.C."/>
            <person name="Cobley V."/>
            <person name="Collins J.E."/>
            <person name="Corby N."/>
            <person name="Coville G.J."/>
            <person name="Deloukas P."/>
            <person name="Dhami P."/>
            <person name="Dunham I."/>
            <person name="Dunn M."/>
            <person name="Earthrowl M.E."/>
            <person name="Ellington A.G."/>
            <person name="Faulkner L."/>
            <person name="Frankish A.G."/>
            <person name="Frankland J."/>
            <person name="French L."/>
            <person name="Garner P."/>
            <person name="Garnett J."/>
            <person name="Gilbert J.G.R."/>
            <person name="Gilson C.J."/>
            <person name="Ghori J."/>
            <person name="Grafham D.V."/>
            <person name="Gribble S.M."/>
            <person name="Griffiths C."/>
            <person name="Hall R.E."/>
            <person name="Hammond S."/>
            <person name="Harley J.L."/>
            <person name="Hart E.A."/>
            <person name="Heath P.D."/>
            <person name="Howden P.J."/>
            <person name="Huckle E.J."/>
            <person name="Hunt P.J."/>
            <person name="Hunt A.R."/>
            <person name="Johnson C."/>
            <person name="Johnson D."/>
            <person name="Kay M."/>
            <person name="Kimberley A.M."/>
            <person name="King A."/>
            <person name="Laird G.K."/>
            <person name="Langford C.J."/>
            <person name="Lawlor S."/>
            <person name="Leongamornlert D.A."/>
            <person name="Lloyd D.M."/>
            <person name="Lloyd C."/>
            <person name="Loveland J.E."/>
            <person name="Lovell J."/>
            <person name="Martin S."/>
            <person name="Mashreghi-Mohammadi M."/>
            <person name="McLaren S.J."/>
            <person name="McMurray A."/>
            <person name="Milne S."/>
            <person name="Moore M.J.F."/>
            <person name="Nickerson T."/>
            <person name="Palmer S.A."/>
            <person name="Pearce A.V."/>
            <person name="Peck A.I."/>
            <person name="Pelan S."/>
            <person name="Phillimore B."/>
            <person name="Porter K.M."/>
            <person name="Rice C.M."/>
            <person name="Searle S."/>
            <person name="Sehra H.K."/>
            <person name="Shownkeen R."/>
            <person name="Skuce C.D."/>
            <person name="Smith M."/>
            <person name="Steward C.A."/>
            <person name="Sycamore N."/>
            <person name="Tester J."/>
            <person name="Thomas D.W."/>
            <person name="Tracey A."/>
            <person name="Tromans A."/>
            <person name="Tubby B."/>
            <person name="Wall M."/>
            <person name="Wallis J.M."/>
            <person name="West A.P."/>
            <person name="Whitehead S.L."/>
            <person name="Willey D.L."/>
            <person name="Wilming L."/>
            <person name="Wray P.W."/>
            <person name="Wright M.W."/>
            <person name="Young L."/>
            <person name="Coulson A."/>
            <person name="Durbin R.M."/>
            <person name="Hubbard T."/>
            <person name="Sulston J.E."/>
            <person name="Beck S."/>
            <person name="Bentley D.R."/>
            <person name="Rogers J."/>
            <person name="Ross M.T."/>
        </authorList>
    </citation>
    <scope>NUCLEOTIDE SEQUENCE [LARGE SCALE GENOMIC DNA]</scope>
</reference>
<reference key="4">
    <citation type="submission" date="2005-07" db="EMBL/GenBank/DDBJ databases">
        <authorList>
            <person name="Mural R.J."/>
            <person name="Istrail S."/>
            <person name="Sutton G.G."/>
            <person name="Florea L."/>
            <person name="Halpern A.L."/>
            <person name="Mobarry C.M."/>
            <person name="Lippert R."/>
            <person name="Walenz B."/>
            <person name="Shatkay H."/>
            <person name="Dew I."/>
            <person name="Miller J.R."/>
            <person name="Flanigan M.J."/>
            <person name="Edwards N.J."/>
            <person name="Bolanos R."/>
            <person name="Fasulo D."/>
            <person name="Halldorsson B.V."/>
            <person name="Hannenhalli S."/>
            <person name="Turner R."/>
            <person name="Yooseph S."/>
            <person name="Lu F."/>
            <person name="Nusskern D.R."/>
            <person name="Shue B.C."/>
            <person name="Zheng X.H."/>
            <person name="Zhong F."/>
            <person name="Delcher A.L."/>
            <person name="Huson D.H."/>
            <person name="Kravitz S.A."/>
            <person name="Mouchard L."/>
            <person name="Reinert K."/>
            <person name="Remington K.A."/>
            <person name="Clark A.G."/>
            <person name="Waterman M.S."/>
            <person name="Eichler E.E."/>
            <person name="Adams M.D."/>
            <person name="Hunkapiller M.W."/>
            <person name="Myers E.W."/>
            <person name="Venter J.C."/>
        </authorList>
    </citation>
    <scope>NUCLEOTIDE SEQUENCE [LARGE SCALE GENOMIC DNA]</scope>
</reference>
<reference key="5">
    <citation type="journal article" date="2004" name="Genome Res.">
        <title>The status, quality, and expansion of the NIH full-length cDNA project: the Mammalian Gene Collection (MGC).</title>
        <authorList>
            <consortium name="The MGC Project Team"/>
        </authorList>
    </citation>
    <scope>NUCLEOTIDE SEQUENCE [LARGE SCALE MRNA]</scope>
    <source>
        <tissue>Brain</tissue>
    </source>
</reference>